<sequence length="161" mass="17765">MPSDLCPDLQALAPLLGSWVGRGMGKYPTIQPFEYLEEVVFSHLDRPFLTYTQKTRAITDGKPLHAETGYLRVPQPGHIELVLAHHSDIAEIEVGTYSVTGDLIEVELVTTTIGLVPTAKQVTALGRFFRIDGDEFAYSVQMGAVGQPLQDHLVAVLHRKQ</sequence>
<gene>
    <name type="ordered locus">ML1006</name>
</gene>
<accession>Q9CCB8</accession>
<dbReference type="EC" id="5.99.-.-" evidence="1"/>
<dbReference type="EMBL" id="AL583920">
    <property type="protein sequence ID" value="CAC31387.1"/>
    <property type="molecule type" value="Genomic_DNA"/>
</dbReference>
<dbReference type="PIR" id="H87034">
    <property type="entry name" value="H87034"/>
</dbReference>
<dbReference type="RefSeq" id="NP_301745.1">
    <property type="nucleotide sequence ID" value="NC_002677.1"/>
</dbReference>
<dbReference type="RefSeq" id="WP_010908069.1">
    <property type="nucleotide sequence ID" value="NC_002677.1"/>
</dbReference>
<dbReference type="SMR" id="Q9CCB8"/>
<dbReference type="STRING" id="272631.gene:17574832"/>
<dbReference type="KEGG" id="mle:ML1006"/>
<dbReference type="PATRIC" id="fig|272631.5.peg.1826"/>
<dbReference type="Leproma" id="ML1006"/>
<dbReference type="eggNOG" id="COG4044">
    <property type="taxonomic scope" value="Bacteria"/>
</dbReference>
<dbReference type="HOGENOM" id="CLU_085483_1_0_11"/>
<dbReference type="OrthoDB" id="4804006at2"/>
<dbReference type="Proteomes" id="UP000000806">
    <property type="component" value="Chromosome"/>
</dbReference>
<dbReference type="GO" id="GO:0020037">
    <property type="term" value="F:heme binding"/>
    <property type="evidence" value="ECO:0007669"/>
    <property type="project" value="UniProtKB-UniRule"/>
</dbReference>
<dbReference type="GO" id="GO:0046872">
    <property type="term" value="F:metal ion binding"/>
    <property type="evidence" value="ECO:0007669"/>
    <property type="project" value="UniProtKB-KW"/>
</dbReference>
<dbReference type="GO" id="GO:0062213">
    <property type="term" value="F:peroxynitrite isomerase activity"/>
    <property type="evidence" value="ECO:0007669"/>
    <property type="project" value="UniProtKB-UniRule"/>
</dbReference>
<dbReference type="CDD" id="cd07828">
    <property type="entry name" value="lipocalin_heme-bd-THAP4-like"/>
    <property type="match status" value="1"/>
</dbReference>
<dbReference type="Gene3D" id="2.40.128.20">
    <property type="match status" value="1"/>
</dbReference>
<dbReference type="HAMAP" id="MF_01297">
    <property type="entry name" value="nitrobindin"/>
    <property type="match status" value="1"/>
</dbReference>
<dbReference type="InterPro" id="IPR012674">
    <property type="entry name" value="Calycin"/>
</dbReference>
<dbReference type="InterPro" id="IPR022939">
    <property type="entry name" value="Nb(III)_bact/plant"/>
</dbReference>
<dbReference type="InterPro" id="IPR045165">
    <property type="entry name" value="Nitrobindin"/>
</dbReference>
<dbReference type="InterPro" id="IPR054873">
    <property type="entry name" value="PeroxynitIsom"/>
</dbReference>
<dbReference type="InterPro" id="IPR014878">
    <property type="entry name" value="THAP4-like_heme-bd"/>
</dbReference>
<dbReference type="NCBIfam" id="NF045819">
    <property type="entry name" value="PeroxynitIsom"/>
    <property type="match status" value="1"/>
</dbReference>
<dbReference type="PANTHER" id="PTHR15854:SF4">
    <property type="entry name" value="PEROXYNITRITE ISOMERASE THAP4"/>
    <property type="match status" value="1"/>
</dbReference>
<dbReference type="PANTHER" id="PTHR15854">
    <property type="entry name" value="THAP4 PROTEIN"/>
    <property type="match status" value="1"/>
</dbReference>
<dbReference type="Pfam" id="PF08768">
    <property type="entry name" value="THAP4_heme-bd"/>
    <property type="match status" value="1"/>
</dbReference>
<dbReference type="SUPFAM" id="SSF50814">
    <property type="entry name" value="Lipocalins"/>
    <property type="match status" value="1"/>
</dbReference>
<organism>
    <name type="scientific">Mycobacterium leprae (strain TN)</name>
    <dbReference type="NCBI Taxonomy" id="272631"/>
    <lineage>
        <taxon>Bacteria</taxon>
        <taxon>Bacillati</taxon>
        <taxon>Actinomycetota</taxon>
        <taxon>Actinomycetes</taxon>
        <taxon>Mycobacteriales</taxon>
        <taxon>Mycobacteriaceae</taxon>
        <taxon>Mycobacterium</taxon>
    </lineage>
</organism>
<reference key="1">
    <citation type="journal article" date="2001" name="Nature">
        <title>Massive gene decay in the leprosy bacillus.</title>
        <authorList>
            <person name="Cole S.T."/>
            <person name="Eiglmeier K."/>
            <person name="Parkhill J."/>
            <person name="James K.D."/>
            <person name="Thomson N.R."/>
            <person name="Wheeler P.R."/>
            <person name="Honore N."/>
            <person name="Garnier T."/>
            <person name="Churcher C.M."/>
            <person name="Harris D.E."/>
            <person name="Mungall K.L."/>
            <person name="Basham D."/>
            <person name="Brown D."/>
            <person name="Chillingworth T."/>
            <person name="Connor R."/>
            <person name="Davies R.M."/>
            <person name="Devlin K."/>
            <person name="Duthoy S."/>
            <person name="Feltwell T."/>
            <person name="Fraser A."/>
            <person name="Hamlin N."/>
            <person name="Holroyd S."/>
            <person name="Hornsby T."/>
            <person name="Jagels K."/>
            <person name="Lacroix C."/>
            <person name="Maclean J."/>
            <person name="Moule S."/>
            <person name="Murphy L.D."/>
            <person name="Oliver K."/>
            <person name="Quail M.A."/>
            <person name="Rajandream M.A."/>
            <person name="Rutherford K.M."/>
            <person name="Rutter S."/>
            <person name="Seeger K."/>
            <person name="Simon S."/>
            <person name="Simmonds M."/>
            <person name="Skelton J."/>
            <person name="Squares R."/>
            <person name="Squares S."/>
            <person name="Stevens K."/>
            <person name="Taylor K."/>
            <person name="Whitehead S."/>
            <person name="Woodward J.R."/>
            <person name="Barrell B.G."/>
        </authorList>
    </citation>
    <scope>NUCLEOTIDE SEQUENCE [LARGE SCALE GENOMIC DNA]</scope>
    <source>
        <strain>TN</strain>
    </source>
</reference>
<feature type="chain" id="PRO_0000356921" description="Peroxynitrite isomerase">
    <location>
        <begin position="1"/>
        <end position="161"/>
    </location>
</feature>
<feature type="short sequence motif" description="GXWXGXG" evidence="1">
    <location>
        <begin position="17"/>
        <end position="23"/>
    </location>
</feature>
<feature type="binding site" description="axial binding residue" evidence="1">
    <location>
        <position position="152"/>
    </location>
    <ligand>
        <name>heme b</name>
        <dbReference type="ChEBI" id="CHEBI:60344"/>
    </ligand>
    <ligandPart>
        <name>Fe</name>
        <dbReference type="ChEBI" id="CHEBI:18248"/>
    </ligandPart>
</feature>
<comment type="function">
    <text evidence="1">Heme-binding protein able to scavenge peroxynitrite and to protect free L-tyrosine against peroxynitrite-mediated nitration, by acting as a peroxynitrite isomerase that converts peroxynitrite to nitrate. Therefore, this protein likely plays a role in peroxynitrite sensing and in the detoxification of reactive nitrogen and oxygen species (RNS and ROS, respectively). Is able to bind nitric oxide (NO) in vitro, but may act as a sensor of peroxynitrite levels in vivo.</text>
</comment>
<comment type="catalytic activity">
    <reaction evidence="1">
        <text>peroxynitrite = nitrate</text>
        <dbReference type="Rhea" id="RHEA:63116"/>
        <dbReference type="ChEBI" id="CHEBI:17632"/>
        <dbReference type="ChEBI" id="CHEBI:25941"/>
    </reaction>
    <physiologicalReaction direction="left-to-right" evidence="1">
        <dbReference type="Rhea" id="RHEA:63117"/>
    </physiologicalReaction>
</comment>
<comment type="cofactor">
    <cofactor evidence="1">
        <name>heme b</name>
        <dbReference type="ChEBI" id="CHEBI:60344"/>
    </cofactor>
    <text evidence="1">Binds 1 heme b group per subunit, that coordinates a highly solvent-exposed Fe(III) atom.</text>
</comment>
<comment type="pathway">
    <text evidence="1">Nitrogen metabolism.</text>
</comment>
<comment type="subunit">
    <text evidence="1">Homodimer.</text>
</comment>
<comment type="domain">
    <text evidence="1">Forms a 10-stranded antiparallel beta-barrel structure able to accommodate a hydrophobic ligand in its interior. In fact, this fold hosts the heme group, which is located in a wide surface cleft.</text>
</comment>
<comment type="similarity">
    <text evidence="1">Belongs to the nitrobindin family.</text>
</comment>
<protein>
    <recommendedName>
        <fullName>Peroxynitrite isomerase</fullName>
        <ecNumber evidence="1">5.99.-.-</ecNumber>
    </recommendedName>
    <alternativeName>
        <fullName>Ferric nitrobindin</fullName>
        <shortName>Nb(III)</shortName>
    </alternativeName>
</protein>
<proteinExistence type="inferred from homology"/>
<keyword id="KW-0349">Heme</keyword>
<keyword id="KW-0408">Iron</keyword>
<keyword id="KW-0413">Isomerase</keyword>
<keyword id="KW-0479">Metal-binding</keyword>
<keyword id="KW-1185">Reference proteome</keyword>
<evidence type="ECO:0000255" key="1">
    <source>
        <dbReference type="HAMAP-Rule" id="MF_01297"/>
    </source>
</evidence>
<name>NB_MYCLE</name>